<keyword id="KW-0963">Cytoplasm</keyword>
<keyword id="KW-0489">Methyltransferase</keyword>
<keyword id="KW-0698">rRNA processing</keyword>
<keyword id="KW-0949">S-adenosyl-L-methionine</keyword>
<keyword id="KW-0808">Transferase</keyword>
<sequence>MKLQLVAVGTKMPDWVQTGYTEYLRRFPKDMPFELIEIPAGKRGKNADIKRILDKEGEQMLAAAGKNRIVTLNIPGKPWDTPQLANELERWKQDGRDVSLLIGGPEGLSPACKAAAEQSWSLSALTLPHPLVRVLVAESLYRAWSITTNHPYHRE</sequence>
<proteinExistence type="inferred from homology"/>
<comment type="function">
    <text evidence="1">Specifically methylates the pseudouridine at position 1915 (m3Psi1915) in 23S rRNA.</text>
</comment>
<comment type="catalytic activity">
    <reaction evidence="1">
        <text>pseudouridine(1915) in 23S rRNA + S-adenosyl-L-methionine = N(3)-methylpseudouridine(1915) in 23S rRNA + S-adenosyl-L-homocysteine + H(+)</text>
        <dbReference type="Rhea" id="RHEA:42752"/>
        <dbReference type="Rhea" id="RHEA-COMP:10221"/>
        <dbReference type="Rhea" id="RHEA-COMP:10222"/>
        <dbReference type="ChEBI" id="CHEBI:15378"/>
        <dbReference type="ChEBI" id="CHEBI:57856"/>
        <dbReference type="ChEBI" id="CHEBI:59789"/>
        <dbReference type="ChEBI" id="CHEBI:65314"/>
        <dbReference type="ChEBI" id="CHEBI:74486"/>
        <dbReference type="EC" id="2.1.1.177"/>
    </reaction>
</comment>
<comment type="subunit">
    <text evidence="1">Homodimer.</text>
</comment>
<comment type="subcellular location">
    <subcellularLocation>
        <location evidence="1">Cytoplasm</location>
    </subcellularLocation>
</comment>
<comment type="similarity">
    <text evidence="1">Belongs to the RNA methyltransferase RlmH family.</text>
</comment>
<evidence type="ECO:0000255" key="1">
    <source>
        <dbReference type="HAMAP-Rule" id="MF_00658"/>
    </source>
</evidence>
<reference key="1">
    <citation type="journal article" date="2005" name="Nucleic Acids Res.">
        <title>The genome sequence of Salmonella enterica serovar Choleraesuis, a highly invasive and resistant zoonotic pathogen.</title>
        <authorList>
            <person name="Chiu C.-H."/>
            <person name="Tang P."/>
            <person name="Chu C."/>
            <person name="Hu S."/>
            <person name="Bao Q."/>
            <person name="Yu J."/>
            <person name="Chou Y.-Y."/>
            <person name="Wang H.-S."/>
            <person name="Lee Y.-S."/>
        </authorList>
    </citation>
    <scope>NUCLEOTIDE SEQUENCE [LARGE SCALE GENOMIC DNA]</scope>
    <source>
        <strain>SC-B67</strain>
    </source>
</reference>
<protein>
    <recommendedName>
        <fullName evidence="1">Ribosomal RNA large subunit methyltransferase H</fullName>
        <ecNumber evidence="1">2.1.1.177</ecNumber>
    </recommendedName>
    <alternativeName>
        <fullName evidence="1">23S rRNA (pseudouridine1915-N3)-methyltransferase</fullName>
    </alternativeName>
    <alternativeName>
        <fullName evidence="1">23S rRNA m3Psi1915 methyltransferase</fullName>
    </alternativeName>
    <alternativeName>
        <fullName evidence="1">rRNA (pseudouridine-N3-)-methyltransferase RlmH</fullName>
    </alternativeName>
</protein>
<name>RLMH_SALCH</name>
<dbReference type="EC" id="2.1.1.177" evidence="1"/>
<dbReference type="EMBL" id="AE017220">
    <property type="protein sequence ID" value="AAX64577.1"/>
    <property type="molecule type" value="Genomic_DNA"/>
</dbReference>
<dbReference type="RefSeq" id="WP_011264220.1">
    <property type="nucleotide sequence ID" value="NC_006905.1"/>
</dbReference>
<dbReference type="SMR" id="Q57RT4"/>
<dbReference type="KEGG" id="sec:SCH_0671"/>
<dbReference type="HOGENOM" id="CLU_100552_1_0_6"/>
<dbReference type="Proteomes" id="UP000000538">
    <property type="component" value="Chromosome"/>
</dbReference>
<dbReference type="GO" id="GO:0005737">
    <property type="term" value="C:cytoplasm"/>
    <property type="evidence" value="ECO:0007669"/>
    <property type="project" value="UniProtKB-SubCell"/>
</dbReference>
<dbReference type="GO" id="GO:0070038">
    <property type="term" value="F:rRNA (pseudouridine-N3-)-methyltransferase activity"/>
    <property type="evidence" value="ECO:0007669"/>
    <property type="project" value="UniProtKB-UniRule"/>
</dbReference>
<dbReference type="CDD" id="cd18081">
    <property type="entry name" value="RlmH-like"/>
    <property type="match status" value="1"/>
</dbReference>
<dbReference type="FunFam" id="3.40.1280.10:FF:000004">
    <property type="entry name" value="Ribosomal RNA large subunit methyltransferase H"/>
    <property type="match status" value="1"/>
</dbReference>
<dbReference type="Gene3D" id="3.40.1280.10">
    <property type="match status" value="1"/>
</dbReference>
<dbReference type="HAMAP" id="MF_00658">
    <property type="entry name" value="23SrRNA_methyltr_H"/>
    <property type="match status" value="1"/>
</dbReference>
<dbReference type="InterPro" id="IPR029028">
    <property type="entry name" value="Alpha/beta_knot_MTases"/>
</dbReference>
<dbReference type="InterPro" id="IPR003742">
    <property type="entry name" value="RlmH-like"/>
</dbReference>
<dbReference type="InterPro" id="IPR029026">
    <property type="entry name" value="tRNA_m1G_MTases_N"/>
</dbReference>
<dbReference type="NCBIfam" id="NF000984">
    <property type="entry name" value="PRK00103.1-1"/>
    <property type="match status" value="1"/>
</dbReference>
<dbReference type="NCBIfam" id="NF000986">
    <property type="entry name" value="PRK00103.1-4"/>
    <property type="match status" value="1"/>
</dbReference>
<dbReference type="NCBIfam" id="TIGR00246">
    <property type="entry name" value="tRNA_RlmH_YbeA"/>
    <property type="match status" value="1"/>
</dbReference>
<dbReference type="PANTHER" id="PTHR33603">
    <property type="entry name" value="METHYLTRANSFERASE"/>
    <property type="match status" value="1"/>
</dbReference>
<dbReference type="PANTHER" id="PTHR33603:SF1">
    <property type="entry name" value="RIBOSOMAL RNA LARGE SUBUNIT METHYLTRANSFERASE H"/>
    <property type="match status" value="1"/>
</dbReference>
<dbReference type="Pfam" id="PF02590">
    <property type="entry name" value="SPOUT_MTase"/>
    <property type="match status" value="1"/>
</dbReference>
<dbReference type="PIRSF" id="PIRSF004505">
    <property type="entry name" value="MT_bac"/>
    <property type="match status" value="1"/>
</dbReference>
<dbReference type="SUPFAM" id="SSF75217">
    <property type="entry name" value="alpha/beta knot"/>
    <property type="match status" value="1"/>
</dbReference>
<accession>Q57RT4</accession>
<organism>
    <name type="scientific">Salmonella choleraesuis (strain SC-B67)</name>
    <dbReference type="NCBI Taxonomy" id="321314"/>
    <lineage>
        <taxon>Bacteria</taxon>
        <taxon>Pseudomonadati</taxon>
        <taxon>Pseudomonadota</taxon>
        <taxon>Gammaproteobacteria</taxon>
        <taxon>Enterobacterales</taxon>
        <taxon>Enterobacteriaceae</taxon>
        <taxon>Salmonella</taxon>
    </lineage>
</organism>
<feature type="chain" id="PRO_0000198170" description="Ribosomal RNA large subunit methyltransferase H">
    <location>
        <begin position="1"/>
        <end position="155"/>
    </location>
</feature>
<feature type="binding site" evidence="1">
    <location>
        <position position="72"/>
    </location>
    <ligand>
        <name>S-adenosyl-L-methionine</name>
        <dbReference type="ChEBI" id="CHEBI:59789"/>
    </ligand>
</feature>
<feature type="binding site" evidence="1">
    <location>
        <position position="103"/>
    </location>
    <ligand>
        <name>S-adenosyl-L-methionine</name>
        <dbReference type="ChEBI" id="CHEBI:59789"/>
    </ligand>
</feature>
<feature type="binding site" evidence="1">
    <location>
        <begin position="122"/>
        <end position="127"/>
    </location>
    <ligand>
        <name>S-adenosyl-L-methionine</name>
        <dbReference type="ChEBI" id="CHEBI:59789"/>
    </ligand>
</feature>
<gene>
    <name evidence="1" type="primary">rlmH</name>
    <name type="ordered locus">SCH_0671</name>
</gene>